<feature type="transit peptide" description="Chloroplast" evidence="4">
    <location>
        <begin position="1"/>
        <end position="40"/>
    </location>
</feature>
<feature type="chain" id="PRO_0000018643" description="Malate dehydrogenase [NADP], chloroplastic">
    <location>
        <begin position="41"/>
        <end position="432"/>
    </location>
</feature>
<feature type="region of interest" description="Disordered" evidence="3">
    <location>
        <begin position="18"/>
        <end position="37"/>
    </location>
</feature>
<feature type="active site" description="Proton acceptor" evidence="1">
    <location>
        <position position="272"/>
    </location>
</feature>
<feature type="binding site" evidence="1">
    <location>
        <begin position="96"/>
        <end position="102"/>
    </location>
    <ligand>
        <name>NADP(+)</name>
        <dbReference type="ChEBI" id="CHEBI:58349"/>
    </ligand>
</feature>
<feature type="binding site" evidence="2">
    <location>
        <position position="177"/>
    </location>
    <ligand>
        <name>substrate</name>
    </ligand>
</feature>
<feature type="binding site" evidence="2">
    <location>
        <position position="183"/>
    </location>
    <ligand>
        <name>substrate</name>
    </ligand>
</feature>
<feature type="binding site" evidence="1">
    <location>
        <position position="190"/>
    </location>
    <ligand>
        <name>NADP(+)</name>
        <dbReference type="ChEBI" id="CHEBI:58349"/>
    </ligand>
</feature>
<feature type="binding site" evidence="1">
    <location>
        <position position="197"/>
    </location>
    <ligand>
        <name>NAD(+)</name>
        <dbReference type="ChEBI" id="CHEBI:57540"/>
    </ligand>
</feature>
<feature type="binding site" evidence="1">
    <location>
        <begin position="214"/>
        <end position="216"/>
    </location>
    <ligand>
        <name>NADP(+)</name>
        <dbReference type="ChEBI" id="CHEBI:58349"/>
    </ligand>
</feature>
<feature type="binding site" evidence="2">
    <location>
        <position position="216"/>
    </location>
    <ligand>
        <name>substrate</name>
    </ligand>
</feature>
<feature type="binding site" evidence="2">
    <location>
        <position position="247"/>
    </location>
    <ligand>
        <name>substrate</name>
    </ligand>
</feature>
<feature type="site" description="Activation of NADP-MDH">
    <location>
        <position position="67"/>
    </location>
</feature>
<feature type="site" description="Activation of NADP-MDH">
    <location>
        <position position="72"/>
    </location>
</feature>
<feature type="disulfide bond" description="In oxidized inactive NAD-MDH" evidence="5">
    <location>
        <begin position="67"/>
        <end position="72"/>
    </location>
</feature>
<feature type="disulfide bond" description="In oxidized inactive NAD-MDH" evidence="1">
    <location>
        <begin position="408"/>
        <end position="420"/>
    </location>
</feature>
<accession>P15719</accession>
<keyword id="KW-0150">Chloroplast</keyword>
<keyword id="KW-0903">Direct protein sequencing</keyword>
<keyword id="KW-1015">Disulfide bond</keyword>
<keyword id="KW-0521">NADP</keyword>
<keyword id="KW-0560">Oxidoreductase</keyword>
<keyword id="KW-0934">Plastid</keyword>
<keyword id="KW-1185">Reference proteome</keyword>
<keyword id="KW-0809">Transit peptide</keyword>
<name>MDHP_MAIZE</name>
<organism>
    <name type="scientific">Zea mays</name>
    <name type="common">Maize</name>
    <dbReference type="NCBI Taxonomy" id="4577"/>
    <lineage>
        <taxon>Eukaryota</taxon>
        <taxon>Viridiplantae</taxon>
        <taxon>Streptophyta</taxon>
        <taxon>Embryophyta</taxon>
        <taxon>Tracheophyta</taxon>
        <taxon>Spermatophyta</taxon>
        <taxon>Magnoliopsida</taxon>
        <taxon>Liliopsida</taxon>
        <taxon>Poales</taxon>
        <taxon>Poaceae</taxon>
        <taxon>PACMAD clade</taxon>
        <taxon>Panicoideae</taxon>
        <taxon>Andropogonodae</taxon>
        <taxon>Andropogoneae</taxon>
        <taxon>Tripsacinae</taxon>
        <taxon>Zea</taxon>
    </lineage>
</organism>
<dbReference type="EC" id="1.1.1.82"/>
<dbReference type="EMBL" id="X16084">
    <property type="protein sequence ID" value="CAA34213.1"/>
    <property type="molecule type" value="mRNA"/>
</dbReference>
<dbReference type="PIR" id="S04859">
    <property type="entry name" value="DEMZMC"/>
</dbReference>
<dbReference type="RefSeq" id="NP_001105420.1">
    <property type="nucleotide sequence ID" value="NM_001111950.1"/>
</dbReference>
<dbReference type="SMR" id="P15719"/>
<dbReference type="FunCoup" id="P15719">
    <property type="interactions" value="1766"/>
</dbReference>
<dbReference type="STRING" id="4577.P15719"/>
<dbReference type="PaxDb" id="4577-GRMZM2G129513_P01"/>
<dbReference type="MaizeGDB" id="40092"/>
<dbReference type="eggNOG" id="KOG1496">
    <property type="taxonomic scope" value="Eukaryota"/>
</dbReference>
<dbReference type="InParanoid" id="P15719"/>
<dbReference type="BRENDA" id="1.1.1.82">
    <property type="organism ID" value="6752"/>
</dbReference>
<dbReference type="SABIO-RK" id="P15719"/>
<dbReference type="Proteomes" id="UP000007305">
    <property type="component" value="Unplaced"/>
</dbReference>
<dbReference type="ExpressionAtlas" id="P15719">
    <property type="expression patterns" value="baseline and differential"/>
</dbReference>
<dbReference type="GO" id="GO:0009507">
    <property type="term" value="C:chloroplast"/>
    <property type="evidence" value="ECO:0007669"/>
    <property type="project" value="UniProtKB-SubCell"/>
</dbReference>
<dbReference type="GO" id="GO:0030060">
    <property type="term" value="F:L-malate dehydrogenase (NAD+) activity"/>
    <property type="evidence" value="ECO:0000318"/>
    <property type="project" value="GO_Central"/>
</dbReference>
<dbReference type="GO" id="GO:0046554">
    <property type="term" value="F:L-malate dehydrogenase (NADP+) activity"/>
    <property type="evidence" value="ECO:0007669"/>
    <property type="project" value="UniProtKB-EC"/>
</dbReference>
<dbReference type="GO" id="GO:0006108">
    <property type="term" value="P:malate metabolic process"/>
    <property type="evidence" value="ECO:0000318"/>
    <property type="project" value="GO_Central"/>
</dbReference>
<dbReference type="GO" id="GO:0006734">
    <property type="term" value="P:NADH metabolic process"/>
    <property type="evidence" value="ECO:0000318"/>
    <property type="project" value="GO_Central"/>
</dbReference>
<dbReference type="GO" id="GO:0006107">
    <property type="term" value="P:oxaloacetate metabolic process"/>
    <property type="evidence" value="ECO:0000318"/>
    <property type="project" value="GO_Central"/>
</dbReference>
<dbReference type="GO" id="GO:0006099">
    <property type="term" value="P:tricarboxylic acid cycle"/>
    <property type="evidence" value="ECO:0000318"/>
    <property type="project" value="GO_Central"/>
</dbReference>
<dbReference type="CDD" id="cd01338">
    <property type="entry name" value="MDH_chloroplast-like"/>
    <property type="match status" value="1"/>
</dbReference>
<dbReference type="FunFam" id="3.90.110.10:FF:000002">
    <property type="entry name" value="Malate dehydrogenase"/>
    <property type="match status" value="1"/>
</dbReference>
<dbReference type="FunFam" id="3.40.50.720:FF:000144">
    <property type="entry name" value="Malate dehydrogenase [NADP]"/>
    <property type="match status" value="1"/>
</dbReference>
<dbReference type="Gene3D" id="3.90.110.10">
    <property type="entry name" value="Lactate dehydrogenase/glycoside hydrolase, family 4, C-terminal"/>
    <property type="match status" value="1"/>
</dbReference>
<dbReference type="Gene3D" id="3.40.50.720">
    <property type="entry name" value="NAD(P)-binding Rossmann-like Domain"/>
    <property type="match status" value="1"/>
</dbReference>
<dbReference type="InterPro" id="IPR022383">
    <property type="entry name" value="Lactate/malate_DH_C"/>
</dbReference>
<dbReference type="InterPro" id="IPR001236">
    <property type="entry name" value="Lactate/malate_DH_N"/>
</dbReference>
<dbReference type="InterPro" id="IPR015955">
    <property type="entry name" value="Lactate_DH/Glyco_Ohase_4_C"/>
</dbReference>
<dbReference type="InterPro" id="IPR001252">
    <property type="entry name" value="Malate_DH_AS"/>
</dbReference>
<dbReference type="InterPro" id="IPR011273">
    <property type="entry name" value="Malate_DH_NADP-dep_pln"/>
</dbReference>
<dbReference type="InterPro" id="IPR010945">
    <property type="entry name" value="Malate_DH_type2"/>
</dbReference>
<dbReference type="InterPro" id="IPR036291">
    <property type="entry name" value="NAD(P)-bd_dom_sf"/>
</dbReference>
<dbReference type="NCBIfam" id="TIGR01757">
    <property type="entry name" value="Malate-DH_plant"/>
    <property type="match status" value="1"/>
</dbReference>
<dbReference type="NCBIfam" id="TIGR01759">
    <property type="entry name" value="MalateDH-SF1"/>
    <property type="match status" value="1"/>
</dbReference>
<dbReference type="NCBIfam" id="NF003916">
    <property type="entry name" value="PRK05442.1"/>
    <property type="match status" value="1"/>
</dbReference>
<dbReference type="PANTHER" id="PTHR23382">
    <property type="entry name" value="MALATE DEHYDROGENASE"/>
    <property type="match status" value="1"/>
</dbReference>
<dbReference type="Pfam" id="PF02866">
    <property type="entry name" value="Ldh_1_C"/>
    <property type="match status" value="1"/>
</dbReference>
<dbReference type="Pfam" id="PF00056">
    <property type="entry name" value="Ldh_1_N"/>
    <property type="match status" value="1"/>
</dbReference>
<dbReference type="SUPFAM" id="SSF56327">
    <property type="entry name" value="LDH C-terminal domain-like"/>
    <property type="match status" value="1"/>
</dbReference>
<dbReference type="SUPFAM" id="SSF51735">
    <property type="entry name" value="NAD(P)-binding Rossmann-fold domains"/>
    <property type="match status" value="1"/>
</dbReference>
<dbReference type="PROSITE" id="PS00068">
    <property type="entry name" value="MDH"/>
    <property type="match status" value="1"/>
</dbReference>
<evidence type="ECO:0000250" key="1"/>
<evidence type="ECO:0000255" key="2">
    <source>
        <dbReference type="PROSITE-ProRule" id="PRU10004"/>
    </source>
</evidence>
<evidence type="ECO:0000256" key="3">
    <source>
        <dbReference type="SAM" id="MobiDB-lite"/>
    </source>
</evidence>
<evidence type="ECO:0000269" key="4">
    <source>
    </source>
</evidence>
<evidence type="ECO:0000269" key="5">
    <source>
    </source>
</evidence>
<evidence type="ECO:0000305" key="6"/>
<sequence length="432" mass="46860">MGLSTVYSPAGPRLVPAPLGRCRSAQPRRPRRAPLATVRCSVDATKQAQDGVATAVATEAPASRKECFGVFCTTYDLKAEDKTKSWRKLVNVAVSGAAGMISNHLLFKLASGEVFGQDQPIALKLLGSERSFQALEGVAMELEDSLYPLLREVSIGIDPYVVFQDVDWALLIGAKPRGPGMERAALLDINGQIFADQGKALNAVASRNDEVLVVGNPCNTNALICLKNAPNIPAKNFHALTRLDENRAKCQLALKAGVFYDKVSNVTIWGNHSTTQVPDFLNAKIDGRPVKEVIKDTKWLEEEFTLTVQKRGGVLIQKWGRSSAASTAVSIVDAIRSLVTPTPEGDWFSTGVYTTGNPYGIAEDIVFSMPCRSKGDGDYELASDVLMDDFLWERIKKSEAELLAEKKCVAHLTGEGNAFCDLPEDTMLPGEV</sequence>
<reference key="1">
    <citation type="journal article" date="1989" name="Plant Mol. Biol.">
        <title>Maize NADP-malate dehydrogenase: cDNA cloning, sequence, and mRNA characterization.</title>
        <authorList>
            <person name="Metzler M."/>
            <person name="Rothermel B.A."/>
            <person name="Nelson T."/>
        </authorList>
    </citation>
    <scope>NUCLEOTIDE SEQUENCE [MRNA]</scope>
    <source>
        <tissue>Leaf</tissue>
    </source>
</reference>
<reference key="2">
    <citation type="journal article" date="1988" name="J. Biol. Chem.">
        <title>Primary structure of the light-dependent regulatory site of corn NADP-malate dehydrogenase.</title>
        <authorList>
            <person name="Decottignies P."/>
            <person name="Schmitter J.-M."/>
            <person name="Miginiac-Maslow M."/>
            <person name="le Marechal P."/>
            <person name="Jacquot J.-P."/>
            <person name="Gadal P."/>
        </authorList>
    </citation>
    <scope>PROTEIN SEQUENCE OF 58-84</scope>
</reference>
<reference key="3">
    <citation type="journal article" date="1992" name="Plant Physiol.">
        <title>Amino acid sequence and molecular weight of native NADP malate dehydrogenase from the C4 plant Zea mays.</title>
        <authorList>
            <person name="Agostino A."/>
            <person name="Jeffrey P."/>
            <person name="Hatch M.D."/>
        </authorList>
    </citation>
    <scope>PROTEIN SEQUENCE OF 41-62</scope>
</reference>
<comment type="function">
    <text>The chloroplastic, NADP-dependent form is essential for the photosynthesis C4 cycle, which allows plants to circumvent the problem of photorespiration. In C4 plants, NADP-MDH activity acts to convert oxaloacetate to malate in chloroplasts of mesophyll cells for transport to the bundle sheath cells.</text>
</comment>
<comment type="catalytic activity">
    <reaction>
        <text>(S)-malate + NADP(+) = oxaloacetate + NADPH + H(+)</text>
        <dbReference type="Rhea" id="RHEA:10824"/>
        <dbReference type="ChEBI" id="CHEBI:15378"/>
        <dbReference type="ChEBI" id="CHEBI:15589"/>
        <dbReference type="ChEBI" id="CHEBI:16452"/>
        <dbReference type="ChEBI" id="CHEBI:57783"/>
        <dbReference type="ChEBI" id="CHEBI:58349"/>
        <dbReference type="EC" id="1.1.1.82"/>
    </reaction>
</comment>
<comment type="activity regulation">
    <text>Chloroplast NADP-MDH is activated upon illumination. In order to be enzymatically active, disulfide bridges on the protein must be reduced by thioredoxin which receives electrons from ferredoxin and the electron transport system of photosynthesis.</text>
</comment>
<comment type="subunit">
    <text>Homodimer.</text>
</comment>
<comment type="subcellular location">
    <subcellularLocation>
        <location>Plastid</location>
        <location>Chloroplast</location>
    </subcellularLocation>
</comment>
<comment type="similarity">
    <text evidence="6">Belongs to the LDH/MDH superfamily. MDH type 2 family.</text>
</comment>
<protein>
    <recommendedName>
        <fullName>Malate dehydrogenase [NADP], chloroplastic</fullName>
        <ecNumber>1.1.1.82</ecNumber>
    </recommendedName>
    <alternativeName>
        <fullName>NADP-MDH</fullName>
    </alternativeName>
</protein>
<proteinExistence type="evidence at protein level"/>